<comment type="function">
    <text evidence="1">Catalyzes the attachment of valine to tRNA(Val). As ValRS can inadvertently accommodate and process structurally similar amino acids such as threonine, to avoid such errors, it has a 'posttransfer' editing activity that hydrolyzes mischarged Thr-tRNA(Val) in a tRNA-dependent manner.</text>
</comment>
<comment type="catalytic activity">
    <reaction evidence="1">
        <text>tRNA(Val) + L-valine + ATP = L-valyl-tRNA(Val) + AMP + diphosphate</text>
        <dbReference type="Rhea" id="RHEA:10704"/>
        <dbReference type="Rhea" id="RHEA-COMP:9672"/>
        <dbReference type="Rhea" id="RHEA-COMP:9708"/>
        <dbReference type="ChEBI" id="CHEBI:30616"/>
        <dbReference type="ChEBI" id="CHEBI:33019"/>
        <dbReference type="ChEBI" id="CHEBI:57762"/>
        <dbReference type="ChEBI" id="CHEBI:78442"/>
        <dbReference type="ChEBI" id="CHEBI:78537"/>
        <dbReference type="ChEBI" id="CHEBI:456215"/>
        <dbReference type="EC" id="6.1.1.9"/>
    </reaction>
</comment>
<comment type="subunit">
    <text evidence="1">Monomer.</text>
</comment>
<comment type="subcellular location">
    <subcellularLocation>
        <location evidence="1">Cytoplasm</location>
    </subcellularLocation>
</comment>
<comment type="domain">
    <text evidence="1">ValRS has two distinct active sites: one for aminoacylation and one for editing. The misactivated threonine is translocated from the active site to the editing site.</text>
</comment>
<comment type="domain">
    <text evidence="1">The C-terminal coiled-coil domain is crucial for aminoacylation activity.</text>
</comment>
<comment type="similarity">
    <text evidence="1">Belongs to the class-I aminoacyl-tRNA synthetase family. ValS type 1 subfamily.</text>
</comment>
<protein>
    <recommendedName>
        <fullName evidence="1">Valine--tRNA ligase</fullName>
        <ecNumber evidence="1">6.1.1.9</ecNumber>
    </recommendedName>
    <alternativeName>
        <fullName evidence="1">Valyl-tRNA synthetase</fullName>
        <shortName evidence="1">ValRS</shortName>
    </alternativeName>
</protein>
<gene>
    <name evidence="1" type="primary">valS</name>
    <name type="ordered locus">BP2203</name>
</gene>
<dbReference type="EC" id="6.1.1.9" evidence="1"/>
<dbReference type="EMBL" id="BX640417">
    <property type="protein sequence ID" value="CAE42481.1"/>
    <property type="molecule type" value="Genomic_DNA"/>
</dbReference>
<dbReference type="RefSeq" id="NP_880851.1">
    <property type="nucleotide sequence ID" value="NC_002929.2"/>
</dbReference>
<dbReference type="RefSeq" id="WP_010930794.1">
    <property type="nucleotide sequence ID" value="NZ_CP039022.1"/>
</dbReference>
<dbReference type="SMR" id="Q7VWK6"/>
<dbReference type="STRING" id="257313.BP2203"/>
<dbReference type="PaxDb" id="257313-BP2203"/>
<dbReference type="KEGG" id="bpe:BP2203"/>
<dbReference type="PATRIC" id="fig|257313.5.peg.2377"/>
<dbReference type="eggNOG" id="COG0525">
    <property type="taxonomic scope" value="Bacteria"/>
</dbReference>
<dbReference type="HOGENOM" id="CLU_001493_0_2_4"/>
<dbReference type="Proteomes" id="UP000002676">
    <property type="component" value="Chromosome"/>
</dbReference>
<dbReference type="GO" id="GO:0005829">
    <property type="term" value="C:cytosol"/>
    <property type="evidence" value="ECO:0007669"/>
    <property type="project" value="TreeGrafter"/>
</dbReference>
<dbReference type="GO" id="GO:0002161">
    <property type="term" value="F:aminoacyl-tRNA deacylase activity"/>
    <property type="evidence" value="ECO:0007669"/>
    <property type="project" value="InterPro"/>
</dbReference>
<dbReference type="GO" id="GO:0005524">
    <property type="term" value="F:ATP binding"/>
    <property type="evidence" value="ECO:0007669"/>
    <property type="project" value="UniProtKB-UniRule"/>
</dbReference>
<dbReference type="GO" id="GO:0004832">
    <property type="term" value="F:valine-tRNA ligase activity"/>
    <property type="evidence" value="ECO:0007669"/>
    <property type="project" value="UniProtKB-UniRule"/>
</dbReference>
<dbReference type="GO" id="GO:0006438">
    <property type="term" value="P:valyl-tRNA aminoacylation"/>
    <property type="evidence" value="ECO:0007669"/>
    <property type="project" value="UniProtKB-UniRule"/>
</dbReference>
<dbReference type="CDD" id="cd07962">
    <property type="entry name" value="Anticodon_Ia_Val"/>
    <property type="match status" value="1"/>
</dbReference>
<dbReference type="CDD" id="cd00817">
    <property type="entry name" value="ValRS_core"/>
    <property type="match status" value="1"/>
</dbReference>
<dbReference type="FunFam" id="1.10.287.380:FF:000001">
    <property type="entry name" value="Valine--tRNA ligase"/>
    <property type="match status" value="1"/>
</dbReference>
<dbReference type="FunFam" id="1.10.730.10:FF:000009">
    <property type="entry name" value="Valine--tRNA ligase, mitochondrial"/>
    <property type="match status" value="1"/>
</dbReference>
<dbReference type="FunFam" id="3.40.50.620:FF:000020">
    <property type="entry name" value="Valine--tRNA ligase, mitochondrial"/>
    <property type="match status" value="1"/>
</dbReference>
<dbReference type="FunFam" id="3.40.50.620:FF:000078">
    <property type="entry name" value="Valine--tRNA ligase, mitochondrial"/>
    <property type="match status" value="1"/>
</dbReference>
<dbReference type="Gene3D" id="3.40.50.620">
    <property type="entry name" value="HUPs"/>
    <property type="match status" value="2"/>
</dbReference>
<dbReference type="Gene3D" id="1.10.730.10">
    <property type="entry name" value="Isoleucyl-tRNA Synthetase, Domain 1"/>
    <property type="match status" value="1"/>
</dbReference>
<dbReference type="Gene3D" id="1.10.287.380">
    <property type="entry name" value="Valyl-tRNA synthetase, C-terminal domain"/>
    <property type="match status" value="1"/>
</dbReference>
<dbReference type="HAMAP" id="MF_02004">
    <property type="entry name" value="Val_tRNA_synth_type1"/>
    <property type="match status" value="1"/>
</dbReference>
<dbReference type="InterPro" id="IPR001412">
    <property type="entry name" value="aa-tRNA-synth_I_CS"/>
</dbReference>
<dbReference type="InterPro" id="IPR002300">
    <property type="entry name" value="aa-tRNA-synth_Ia"/>
</dbReference>
<dbReference type="InterPro" id="IPR033705">
    <property type="entry name" value="Anticodon_Ia_Val"/>
</dbReference>
<dbReference type="InterPro" id="IPR013155">
    <property type="entry name" value="M/V/L/I-tRNA-synth_anticd-bd"/>
</dbReference>
<dbReference type="InterPro" id="IPR014729">
    <property type="entry name" value="Rossmann-like_a/b/a_fold"/>
</dbReference>
<dbReference type="InterPro" id="IPR010978">
    <property type="entry name" value="tRNA-bd_arm"/>
</dbReference>
<dbReference type="InterPro" id="IPR009080">
    <property type="entry name" value="tRNAsynth_Ia_anticodon-bd"/>
</dbReference>
<dbReference type="InterPro" id="IPR037118">
    <property type="entry name" value="Val-tRNA_synth_C_sf"/>
</dbReference>
<dbReference type="InterPro" id="IPR019499">
    <property type="entry name" value="Val-tRNA_synth_tRNA-bd"/>
</dbReference>
<dbReference type="InterPro" id="IPR009008">
    <property type="entry name" value="Val/Leu/Ile-tRNA-synth_edit"/>
</dbReference>
<dbReference type="InterPro" id="IPR002303">
    <property type="entry name" value="Valyl-tRNA_ligase"/>
</dbReference>
<dbReference type="NCBIfam" id="NF004349">
    <property type="entry name" value="PRK05729.1"/>
    <property type="match status" value="1"/>
</dbReference>
<dbReference type="NCBIfam" id="TIGR00422">
    <property type="entry name" value="valS"/>
    <property type="match status" value="1"/>
</dbReference>
<dbReference type="PANTHER" id="PTHR11946:SF93">
    <property type="entry name" value="VALINE--TRNA LIGASE, CHLOROPLASTIC_MITOCHONDRIAL 2"/>
    <property type="match status" value="1"/>
</dbReference>
<dbReference type="PANTHER" id="PTHR11946">
    <property type="entry name" value="VALYL-TRNA SYNTHETASES"/>
    <property type="match status" value="1"/>
</dbReference>
<dbReference type="Pfam" id="PF08264">
    <property type="entry name" value="Anticodon_1"/>
    <property type="match status" value="1"/>
</dbReference>
<dbReference type="Pfam" id="PF00133">
    <property type="entry name" value="tRNA-synt_1"/>
    <property type="match status" value="1"/>
</dbReference>
<dbReference type="Pfam" id="PF10458">
    <property type="entry name" value="Val_tRNA-synt_C"/>
    <property type="match status" value="1"/>
</dbReference>
<dbReference type="PRINTS" id="PR00986">
    <property type="entry name" value="TRNASYNTHVAL"/>
</dbReference>
<dbReference type="SUPFAM" id="SSF47323">
    <property type="entry name" value="Anticodon-binding domain of a subclass of class I aminoacyl-tRNA synthetases"/>
    <property type="match status" value="1"/>
</dbReference>
<dbReference type="SUPFAM" id="SSF52374">
    <property type="entry name" value="Nucleotidylyl transferase"/>
    <property type="match status" value="1"/>
</dbReference>
<dbReference type="SUPFAM" id="SSF46589">
    <property type="entry name" value="tRNA-binding arm"/>
    <property type="match status" value="1"/>
</dbReference>
<dbReference type="SUPFAM" id="SSF50677">
    <property type="entry name" value="ValRS/IleRS/LeuRS editing domain"/>
    <property type="match status" value="1"/>
</dbReference>
<dbReference type="PROSITE" id="PS00178">
    <property type="entry name" value="AA_TRNA_LIGASE_I"/>
    <property type="match status" value="1"/>
</dbReference>
<feature type="chain" id="PRO_0000224447" description="Valine--tRNA ligase">
    <location>
        <begin position="1"/>
        <end position="960"/>
    </location>
</feature>
<feature type="coiled-coil region" evidence="1">
    <location>
        <begin position="893"/>
        <end position="958"/>
    </location>
</feature>
<feature type="short sequence motif" description="'HIGH' region">
    <location>
        <begin position="61"/>
        <end position="71"/>
    </location>
</feature>
<feature type="short sequence motif" description="'KMSKS' region">
    <location>
        <begin position="569"/>
        <end position="573"/>
    </location>
</feature>
<feature type="binding site" evidence="1">
    <location>
        <position position="572"/>
    </location>
    <ligand>
        <name>ATP</name>
        <dbReference type="ChEBI" id="CHEBI:30616"/>
    </ligand>
</feature>
<name>SYV_BORPE</name>
<sequence length="960" mass="107381">MTDAAPNQPVNESQELSKSFEPAEIETRWYDEWAKRGYFDAGRHVETGTDPQPYVIQFPPPNVTGTLHMGHAFNQTIMDGLVRYHRMLGDDTVFVPGTDHAGIATQIVVERQLDAQKVSRHDLGREKFVEKVWEWKEQSGSTITGQVRRLGASADWPREYFTMDARMSRGVAETFVRLYQQGLIYRGKRLVNWDPKLLTAVSDLEVQSEEVDGHMWHILYPFVDGPQTITDQDGNTVTLRGMTIATTRPETMLADGALCVHPDDPRYKHLLGKLVELPLCDRNIPIIADDFVDPDFGTGCVKITGAHDFNDYACALRHDIPLIVIFTLDAHINENGPKQFQGLERYEARQAVVAELQAQQYLVKVEPHKMMQPKGDRTGVVLEPMLTDQWFVAMSKPAPAGTLNPGKSITEVALEAVADGRIAFYPENWTTIYNQWLNNIQDWCISRQLWWGHQIPAWYSEDGQVFVARSEEEAQEQARAAGVSGPLTRDPDILDTWFSSALVPFTTFGWPEDTPDLRRYLPSSVLVTGFDIIFFWVARMVMLTMHMTGSVPFKHVYVHGLIRDADGQKMSKSKGNTLDPVDLIDGIDLKGLVRKRTFGLMHPKQAGAIEKATRRQYPDGIPAFGTDALRFTMAAYATLGRNINFDLKRCEGYRNFCNKLWNATRFVLMNTEGHALDGDGGELSFADRWIVSQLQALEAEVERGFADYRFDNVANALYRYVWDEYCDWYLELAKVQIQQGTPAQQLGTRRTLIRVLEAVLRLAHPVIPFITEELWQKVALVAGKRTAGAVASVSVQPYPRANPQAVDAEAEAAVAELKSQVEAVRALRGEMNLSPAQRVPLVAEGPTDVLSRNTPYLAALAKLSEVEVVAALPDAGAPVQVVGDARLMLHVEIDVAAECARLDKEIARLEGEIAKANGKLGNASFVERAPAAVVEQEKARLAQFSETLEKVRGQRVKLGV</sequence>
<organism>
    <name type="scientific">Bordetella pertussis (strain Tohama I / ATCC BAA-589 / NCTC 13251)</name>
    <dbReference type="NCBI Taxonomy" id="257313"/>
    <lineage>
        <taxon>Bacteria</taxon>
        <taxon>Pseudomonadati</taxon>
        <taxon>Pseudomonadota</taxon>
        <taxon>Betaproteobacteria</taxon>
        <taxon>Burkholderiales</taxon>
        <taxon>Alcaligenaceae</taxon>
        <taxon>Bordetella</taxon>
    </lineage>
</organism>
<accession>Q7VWK6</accession>
<keyword id="KW-0030">Aminoacyl-tRNA synthetase</keyword>
<keyword id="KW-0067">ATP-binding</keyword>
<keyword id="KW-0175">Coiled coil</keyword>
<keyword id="KW-0963">Cytoplasm</keyword>
<keyword id="KW-0436">Ligase</keyword>
<keyword id="KW-0547">Nucleotide-binding</keyword>
<keyword id="KW-0648">Protein biosynthesis</keyword>
<keyword id="KW-1185">Reference proteome</keyword>
<evidence type="ECO:0000255" key="1">
    <source>
        <dbReference type="HAMAP-Rule" id="MF_02004"/>
    </source>
</evidence>
<reference key="1">
    <citation type="journal article" date="2003" name="Nat. Genet.">
        <title>Comparative analysis of the genome sequences of Bordetella pertussis, Bordetella parapertussis and Bordetella bronchiseptica.</title>
        <authorList>
            <person name="Parkhill J."/>
            <person name="Sebaihia M."/>
            <person name="Preston A."/>
            <person name="Murphy L.D."/>
            <person name="Thomson N.R."/>
            <person name="Harris D.E."/>
            <person name="Holden M.T.G."/>
            <person name="Churcher C.M."/>
            <person name="Bentley S.D."/>
            <person name="Mungall K.L."/>
            <person name="Cerdeno-Tarraga A.-M."/>
            <person name="Temple L."/>
            <person name="James K.D."/>
            <person name="Harris B."/>
            <person name="Quail M.A."/>
            <person name="Achtman M."/>
            <person name="Atkin R."/>
            <person name="Baker S."/>
            <person name="Basham D."/>
            <person name="Bason N."/>
            <person name="Cherevach I."/>
            <person name="Chillingworth T."/>
            <person name="Collins M."/>
            <person name="Cronin A."/>
            <person name="Davis P."/>
            <person name="Doggett J."/>
            <person name="Feltwell T."/>
            <person name="Goble A."/>
            <person name="Hamlin N."/>
            <person name="Hauser H."/>
            <person name="Holroyd S."/>
            <person name="Jagels K."/>
            <person name="Leather S."/>
            <person name="Moule S."/>
            <person name="Norberczak H."/>
            <person name="O'Neil S."/>
            <person name="Ormond D."/>
            <person name="Price C."/>
            <person name="Rabbinowitsch E."/>
            <person name="Rutter S."/>
            <person name="Sanders M."/>
            <person name="Saunders D."/>
            <person name="Seeger K."/>
            <person name="Sharp S."/>
            <person name="Simmonds M."/>
            <person name="Skelton J."/>
            <person name="Squares R."/>
            <person name="Squares S."/>
            <person name="Stevens K."/>
            <person name="Unwin L."/>
            <person name="Whitehead S."/>
            <person name="Barrell B.G."/>
            <person name="Maskell D.J."/>
        </authorList>
    </citation>
    <scope>NUCLEOTIDE SEQUENCE [LARGE SCALE GENOMIC DNA]</scope>
    <source>
        <strain>Tohama I / ATCC BAA-589 / NCTC 13251</strain>
    </source>
</reference>
<proteinExistence type="inferred from homology"/>